<evidence type="ECO:0000255" key="1">
    <source>
        <dbReference type="HAMAP-Rule" id="MF_00373"/>
    </source>
</evidence>
<evidence type="ECO:0000256" key="2">
    <source>
        <dbReference type="SAM" id="MobiDB-lite"/>
    </source>
</evidence>
<evidence type="ECO:0000305" key="3"/>
<protein>
    <recommendedName>
        <fullName evidence="1">Large ribosomal subunit protein bL28</fullName>
    </recommendedName>
    <alternativeName>
        <fullName evidence="3">50S ribosomal protein L28</fullName>
    </alternativeName>
</protein>
<reference key="1">
    <citation type="journal article" date="2011" name="PLoS Genet.">
        <title>The evolution of host specialization in the vertebrate gut symbiont Lactobacillus reuteri.</title>
        <authorList>
            <person name="Frese S.A."/>
            <person name="Benson A.K."/>
            <person name="Tannock G.W."/>
            <person name="Loach D.M."/>
            <person name="Kim J."/>
            <person name="Zhang M."/>
            <person name="Oh P.L."/>
            <person name="Heng N.C."/>
            <person name="Patil P.B."/>
            <person name="Juge N."/>
            <person name="Mackenzie D.A."/>
            <person name="Pearson B.M."/>
            <person name="Lapidus A."/>
            <person name="Dalin E."/>
            <person name="Tice H."/>
            <person name="Goltsman E."/>
            <person name="Land M."/>
            <person name="Hauser L."/>
            <person name="Ivanova N."/>
            <person name="Kyrpides N.C."/>
            <person name="Walter J."/>
        </authorList>
    </citation>
    <scope>NUCLEOTIDE SEQUENCE [LARGE SCALE GENOMIC DNA]</scope>
    <source>
        <strain>DSM 20016</strain>
    </source>
</reference>
<sequence>MAKDFINGKRTQFGNKRSHALNSSRRSWKPNLQKVTILVNGKPKKVYVSARTLKSGKVTRV</sequence>
<name>RL28_LIMRD</name>
<feature type="chain" id="PRO_1000059952" description="Large ribosomal subunit protein bL28">
    <location>
        <begin position="1"/>
        <end position="61"/>
    </location>
</feature>
<feature type="region of interest" description="Disordered" evidence="2">
    <location>
        <begin position="1"/>
        <end position="26"/>
    </location>
</feature>
<feature type="compositionally biased region" description="Polar residues" evidence="2">
    <location>
        <begin position="9"/>
        <end position="25"/>
    </location>
</feature>
<gene>
    <name evidence="1" type="primary">rpmB</name>
    <name type="ordered locus">Lreu_1165</name>
</gene>
<proteinExistence type="inferred from homology"/>
<dbReference type="EMBL" id="CP000705">
    <property type="protein sequence ID" value="ABQ83422.1"/>
    <property type="molecule type" value="Genomic_DNA"/>
</dbReference>
<dbReference type="RefSeq" id="WP_003663833.1">
    <property type="nucleotide sequence ID" value="NZ_AZDD01000001.1"/>
</dbReference>
<dbReference type="SMR" id="A5VKP8"/>
<dbReference type="STRING" id="557436.Lreu_1165"/>
<dbReference type="GeneID" id="77191834"/>
<dbReference type="KEGG" id="lre:Lreu_1165"/>
<dbReference type="eggNOG" id="COG0227">
    <property type="taxonomic scope" value="Bacteria"/>
</dbReference>
<dbReference type="HOGENOM" id="CLU_064548_7_1_9"/>
<dbReference type="Proteomes" id="UP000001991">
    <property type="component" value="Chromosome"/>
</dbReference>
<dbReference type="GO" id="GO:1990904">
    <property type="term" value="C:ribonucleoprotein complex"/>
    <property type="evidence" value="ECO:0007669"/>
    <property type="project" value="UniProtKB-KW"/>
</dbReference>
<dbReference type="GO" id="GO:0005840">
    <property type="term" value="C:ribosome"/>
    <property type="evidence" value="ECO:0007669"/>
    <property type="project" value="UniProtKB-KW"/>
</dbReference>
<dbReference type="GO" id="GO:0003735">
    <property type="term" value="F:structural constituent of ribosome"/>
    <property type="evidence" value="ECO:0007669"/>
    <property type="project" value="InterPro"/>
</dbReference>
<dbReference type="GO" id="GO:0006412">
    <property type="term" value="P:translation"/>
    <property type="evidence" value="ECO:0007669"/>
    <property type="project" value="UniProtKB-UniRule"/>
</dbReference>
<dbReference type="Gene3D" id="2.30.170.40">
    <property type="entry name" value="Ribosomal protein L28/L24"/>
    <property type="match status" value="1"/>
</dbReference>
<dbReference type="HAMAP" id="MF_00373">
    <property type="entry name" value="Ribosomal_bL28"/>
    <property type="match status" value="1"/>
</dbReference>
<dbReference type="InterPro" id="IPR050096">
    <property type="entry name" value="Bacterial_rp_bL28"/>
</dbReference>
<dbReference type="InterPro" id="IPR026569">
    <property type="entry name" value="Ribosomal_bL28"/>
</dbReference>
<dbReference type="InterPro" id="IPR034704">
    <property type="entry name" value="Ribosomal_bL28/bL31-like_sf"/>
</dbReference>
<dbReference type="InterPro" id="IPR001383">
    <property type="entry name" value="Ribosomal_bL28_bact-type"/>
</dbReference>
<dbReference type="InterPro" id="IPR037147">
    <property type="entry name" value="Ribosomal_bL28_sf"/>
</dbReference>
<dbReference type="NCBIfam" id="TIGR00009">
    <property type="entry name" value="L28"/>
    <property type="match status" value="1"/>
</dbReference>
<dbReference type="PANTHER" id="PTHR39080">
    <property type="entry name" value="50S RIBOSOMAL PROTEIN L28"/>
    <property type="match status" value="1"/>
</dbReference>
<dbReference type="PANTHER" id="PTHR39080:SF1">
    <property type="entry name" value="LARGE RIBOSOMAL SUBUNIT PROTEIN BL28A"/>
    <property type="match status" value="1"/>
</dbReference>
<dbReference type="Pfam" id="PF00830">
    <property type="entry name" value="Ribosomal_L28"/>
    <property type="match status" value="1"/>
</dbReference>
<dbReference type="SUPFAM" id="SSF143800">
    <property type="entry name" value="L28p-like"/>
    <property type="match status" value="1"/>
</dbReference>
<comment type="similarity">
    <text evidence="1">Belongs to the bacterial ribosomal protein bL28 family.</text>
</comment>
<accession>A5VKP8</accession>
<organism>
    <name type="scientific">Limosilactobacillus reuteri (strain DSM 20016)</name>
    <name type="common">Lactobacillus reuteri</name>
    <dbReference type="NCBI Taxonomy" id="557436"/>
    <lineage>
        <taxon>Bacteria</taxon>
        <taxon>Bacillati</taxon>
        <taxon>Bacillota</taxon>
        <taxon>Bacilli</taxon>
        <taxon>Lactobacillales</taxon>
        <taxon>Lactobacillaceae</taxon>
        <taxon>Limosilactobacillus</taxon>
    </lineage>
</organism>
<keyword id="KW-1185">Reference proteome</keyword>
<keyword id="KW-0687">Ribonucleoprotein</keyword>
<keyword id="KW-0689">Ribosomal protein</keyword>